<reference key="1">
    <citation type="submission" date="2006-08" db="EMBL/GenBank/DDBJ databases">
        <title>Complete sequence of Alkalilimnicola ehrilichei MLHE-1.</title>
        <authorList>
            <person name="Copeland A."/>
            <person name="Lucas S."/>
            <person name="Lapidus A."/>
            <person name="Barry K."/>
            <person name="Detter J.C."/>
            <person name="Glavina del Rio T."/>
            <person name="Hammon N."/>
            <person name="Israni S."/>
            <person name="Dalin E."/>
            <person name="Tice H."/>
            <person name="Pitluck S."/>
            <person name="Sims D."/>
            <person name="Brettin T."/>
            <person name="Bruce D."/>
            <person name="Han C."/>
            <person name="Tapia R."/>
            <person name="Gilna P."/>
            <person name="Schmutz J."/>
            <person name="Larimer F."/>
            <person name="Land M."/>
            <person name="Hauser L."/>
            <person name="Kyrpides N."/>
            <person name="Mikhailova N."/>
            <person name="Oremland R.S."/>
            <person name="Hoeft S.E."/>
            <person name="Switzer-Blum J."/>
            <person name="Kulp T."/>
            <person name="King G."/>
            <person name="Tabita R."/>
            <person name="Witte B."/>
            <person name="Santini J.M."/>
            <person name="Basu P."/>
            <person name="Hollibaugh J.T."/>
            <person name="Xie G."/>
            <person name="Stolz J.F."/>
            <person name="Richardson P."/>
        </authorList>
    </citation>
    <scope>NUCLEOTIDE SEQUENCE [LARGE SCALE GENOMIC DNA]</scope>
    <source>
        <strain>ATCC BAA-1101 / DSM 17681 / MLHE-1</strain>
    </source>
</reference>
<accession>Q0A6V9</accession>
<protein>
    <recommendedName>
        <fullName evidence="1">Protein translocase subunit SecA</fullName>
        <ecNumber evidence="1">7.4.2.8</ecNumber>
    </recommendedName>
</protein>
<sequence length="909" mass="102667">MFSAIAKKVFGTRNDRAVKRLAKEVERINALEPEIEALSDDQLRARTEAFREQVEQGRTLDDLLPEAFAVAREASRRVLGMRHFDVQLIGGMVLHQGKIAEMKTGEGKTLVATLAVYLHALSGRGVHVVTVNDYLARRDAAWMGRIYEFLGLSVGVVVPGQSREEKKAAYEADITYGTNNEFGFDYLRDNMAFRPEDRVQRELAYAIVDEVDSILIDEARTPLIISGPAEQSSELYQQMTRIVPRLQRQEEEDGPGDYYLDEKARQAHITEEGHENIERLLQAEGLLEEGESLYDARNISLVHHLNAALRAHTLFQKDVNYLVQDNKIVIVDEFTGRAMPGRRWSEGLHQAVEAKEGVPIQSENQTLASITFQNYFRMYELLAGMTGTADTEAFEFQHIYGLEVLSIPTHKPMIRDDMTDLVYRTAREKYDAIIEDIQWCAQHDRPVLVGTTSIEASELLSKALRKAKIPHNVLNAKNHEQEAGIIANAGLPGAVTIATNMAGRGTDIVLGGNLEAELAELGEDASEEKIEQVKRDWQARHDRVIEAGGLHVIGTERHESRRIDNQLRGRAGRQGDPGSSRFYLSLEDSLLRIFASERMSGMMQRLGMEEGEAIESPMVSRVIENAQRKVEAYNFDVRKHLLDFDDVANDQRRVIYQQRRELLEADDVSETVDAMRNDVIDSVISEFIPPGSIDEQWDVAGLEETLESDFGLKLPLRQWLDEDDSLHEETLRERIHHEVEAHYRGKEELAGAEVLRQFEKAVMLQVLDKTWKDHLAAMDYLRQGIHLRGYAQRNPKQEFKREAFAMFQEMLEGLKREVVGLLCRVRVRAEEDVEAVEEQRRRQGDMQYRHAQANSLSGQGAGGEGAAGGTARGPVQQADQLPFGRKVGRNEPCPCGSGKKYKQCCGKLS</sequence>
<organism>
    <name type="scientific">Alkalilimnicola ehrlichii (strain ATCC BAA-1101 / DSM 17681 / MLHE-1)</name>
    <dbReference type="NCBI Taxonomy" id="187272"/>
    <lineage>
        <taxon>Bacteria</taxon>
        <taxon>Pseudomonadati</taxon>
        <taxon>Pseudomonadota</taxon>
        <taxon>Gammaproteobacteria</taxon>
        <taxon>Chromatiales</taxon>
        <taxon>Ectothiorhodospiraceae</taxon>
        <taxon>Alkalilimnicola</taxon>
    </lineage>
</organism>
<gene>
    <name evidence="1" type="primary">secA</name>
    <name type="ordered locus">Mlg_2086</name>
</gene>
<feature type="chain" id="PRO_0000318304" description="Protein translocase subunit SecA">
    <location>
        <begin position="1"/>
        <end position="909"/>
    </location>
</feature>
<feature type="region of interest" description="Disordered" evidence="2">
    <location>
        <begin position="834"/>
        <end position="909"/>
    </location>
</feature>
<feature type="compositionally biased region" description="Basic and acidic residues" evidence="2">
    <location>
        <begin position="837"/>
        <end position="848"/>
    </location>
</feature>
<feature type="compositionally biased region" description="Gly residues" evidence="2">
    <location>
        <begin position="859"/>
        <end position="871"/>
    </location>
</feature>
<feature type="binding site" evidence="1">
    <location>
        <position position="87"/>
    </location>
    <ligand>
        <name>ATP</name>
        <dbReference type="ChEBI" id="CHEBI:30616"/>
    </ligand>
</feature>
<feature type="binding site" evidence="1">
    <location>
        <begin position="105"/>
        <end position="109"/>
    </location>
    <ligand>
        <name>ATP</name>
        <dbReference type="ChEBI" id="CHEBI:30616"/>
    </ligand>
</feature>
<feature type="binding site" evidence="1">
    <location>
        <position position="507"/>
    </location>
    <ligand>
        <name>ATP</name>
        <dbReference type="ChEBI" id="CHEBI:30616"/>
    </ligand>
</feature>
<feature type="binding site" evidence="1">
    <location>
        <position position="893"/>
    </location>
    <ligand>
        <name>Zn(2+)</name>
        <dbReference type="ChEBI" id="CHEBI:29105"/>
    </ligand>
</feature>
<feature type="binding site" evidence="1">
    <location>
        <position position="895"/>
    </location>
    <ligand>
        <name>Zn(2+)</name>
        <dbReference type="ChEBI" id="CHEBI:29105"/>
    </ligand>
</feature>
<feature type="binding site" evidence="1">
    <location>
        <position position="904"/>
    </location>
    <ligand>
        <name>Zn(2+)</name>
        <dbReference type="ChEBI" id="CHEBI:29105"/>
    </ligand>
</feature>
<feature type="binding site" evidence="1">
    <location>
        <position position="905"/>
    </location>
    <ligand>
        <name>Zn(2+)</name>
        <dbReference type="ChEBI" id="CHEBI:29105"/>
    </ligand>
</feature>
<evidence type="ECO:0000255" key="1">
    <source>
        <dbReference type="HAMAP-Rule" id="MF_01382"/>
    </source>
</evidence>
<evidence type="ECO:0000256" key="2">
    <source>
        <dbReference type="SAM" id="MobiDB-lite"/>
    </source>
</evidence>
<name>SECA_ALKEH</name>
<dbReference type="EC" id="7.4.2.8" evidence="1"/>
<dbReference type="EMBL" id="CP000453">
    <property type="protein sequence ID" value="ABI57428.1"/>
    <property type="molecule type" value="Genomic_DNA"/>
</dbReference>
<dbReference type="RefSeq" id="WP_011629822.1">
    <property type="nucleotide sequence ID" value="NC_008340.1"/>
</dbReference>
<dbReference type="SMR" id="Q0A6V9"/>
<dbReference type="KEGG" id="aeh:Mlg_2086"/>
<dbReference type="eggNOG" id="COG0653">
    <property type="taxonomic scope" value="Bacteria"/>
</dbReference>
<dbReference type="HOGENOM" id="CLU_005314_3_0_6"/>
<dbReference type="OrthoDB" id="9805579at2"/>
<dbReference type="Proteomes" id="UP000001962">
    <property type="component" value="Chromosome"/>
</dbReference>
<dbReference type="GO" id="GO:0031522">
    <property type="term" value="C:cell envelope Sec protein transport complex"/>
    <property type="evidence" value="ECO:0007669"/>
    <property type="project" value="TreeGrafter"/>
</dbReference>
<dbReference type="GO" id="GO:0005829">
    <property type="term" value="C:cytosol"/>
    <property type="evidence" value="ECO:0007669"/>
    <property type="project" value="TreeGrafter"/>
</dbReference>
<dbReference type="GO" id="GO:0005886">
    <property type="term" value="C:plasma membrane"/>
    <property type="evidence" value="ECO:0007669"/>
    <property type="project" value="UniProtKB-SubCell"/>
</dbReference>
<dbReference type="GO" id="GO:0005524">
    <property type="term" value="F:ATP binding"/>
    <property type="evidence" value="ECO:0007669"/>
    <property type="project" value="UniProtKB-UniRule"/>
</dbReference>
<dbReference type="GO" id="GO:0046872">
    <property type="term" value="F:metal ion binding"/>
    <property type="evidence" value="ECO:0007669"/>
    <property type="project" value="UniProtKB-KW"/>
</dbReference>
<dbReference type="GO" id="GO:0008564">
    <property type="term" value="F:protein-exporting ATPase activity"/>
    <property type="evidence" value="ECO:0007669"/>
    <property type="project" value="UniProtKB-EC"/>
</dbReference>
<dbReference type="GO" id="GO:0065002">
    <property type="term" value="P:intracellular protein transmembrane transport"/>
    <property type="evidence" value="ECO:0007669"/>
    <property type="project" value="UniProtKB-UniRule"/>
</dbReference>
<dbReference type="GO" id="GO:0017038">
    <property type="term" value="P:protein import"/>
    <property type="evidence" value="ECO:0007669"/>
    <property type="project" value="InterPro"/>
</dbReference>
<dbReference type="GO" id="GO:0006605">
    <property type="term" value="P:protein targeting"/>
    <property type="evidence" value="ECO:0007669"/>
    <property type="project" value="UniProtKB-UniRule"/>
</dbReference>
<dbReference type="GO" id="GO:0043952">
    <property type="term" value="P:protein transport by the Sec complex"/>
    <property type="evidence" value="ECO:0007669"/>
    <property type="project" value="TreeGrafter"/>
</dbReference>
<dbReference type="CDD" id="cd17928">
    <property type="entry name" value="DEXDc_SecA"/>
    <property type="match status" value="1"/>
</dbReference>
<dbReference type="CDD" id="cd18803">
    <property type="entry name" value="SF2_C_secA"/>
    <property type="match status" value="1"/>
</dbReference>
<dbReference type="FunFam" id="3.40.50.300:FF:000081">
    <property type="entry name" value="Preprotein translocase subunit SecA"/>
    <property type="match status" value="1"/>
</dbReference>
<dbReference type="FunFam" id="3.40.50.300:FF:000113">
    <property type="entry name" value="Preprotein translocase subunit SecA"/>
    <property type="match status" value="1"/>
</dbReference>
<dbReference type="FunFam" id="3.90.1440.10:FF:000001">
    <property type="entry name" value="Preprotein translocase subunit SecA"/>
    <property type="match status" value="1"/>
</dbReference>
<dbReference type="FunFam" id="1.10.3060.10:FF:000003">
    <property type="entry name" value="Protein translocase subunit SecA"/>
    <property type="match status" value="1"/>
</dbReference>
<dbReference type="Gene3D" id="1.10.3060.10">
    <property type="entry name" value="Helical scaffold and wing domains of SecA"/>
    <property type="match status" value="1"/>
</dbReference>
<dbReference type="Gene3D" id="3.40.50.300">
    <property type="entry name" value="P-loop containing nucleotide triphosphate hydrolases"/>
    <property type="match status" value="2"/>
</dbReference>
<dbReference type="Gene3D" id="3.90.1440.10">
    <property type="entry name" value="SecA, preprotein cross-linking domain"/>
    <property type="match status" value="1"/>
</dbReference>
<dbReference type="HAMAP" id="MF_01382">
    <property type="entry name" value="SecA"/>
    <property type="match status" value="1"/>
</dbReference>
<dbReference type="InterPro" id="IPR014001">
    <property type="entry name" value="Helicase_ATP-bd"/>
</dbReference>
<dbReference type="InterPro" id="IPR001650">
    <property type="entry name" value="Helicase_C-like"/>
</dbReference>
<dbReference type="InterPro" id="IPR027417">
    <property type="entry name" value="P-loop_NTPase"/>
</dbReference>
<dbReference type="InterPro" id="IPR004027">
    <property type="entry name" value="SEC_C_motif"/>
</dbReference>
<dbReference type="InterPro" id="IPR000185">
    <property type="entry name" value="SecA"/>
</dbReference>
<dbReference type="InterPro" id="IPR020937">
    <property type="entry name" value="SecA_CS"/>
</dbReference>
<dbReference type="InterPro" id="IPR011115">
    <property type="entry name" value="SecA_DEAD"/>
</dbReference>
<dbReference type="InterPro" id="IPR014018">
    <property type="entry name" value="SecA_motor_DEAD"/>
</dbReference>
<dbReference type="InterPro" id="IPR011130">
    <property type="entry name" value="SecA_preprotein_X-link_dom"/>
</dbReference>
<dbReference type="InterPro" id="IPR044722">
    <property type="entry name" value="SecA_SF2_C"/>
</dbReference>
<dbReference type="InterPro" id="IPR011116">
    <property type="entry name" value="SecA_Wing/Scaffold"/>
</dbReference>
<dbReference type="InterPro" id="IPR036266">
    <property type="entry name" value="SecA_Wing/Scaffold_sf"/>
</dbReference>
<dbReference type="InterPro" id="IPR036670">
    <property type="entry name" value="SecA_X-link_sf"/>
</dbReference>
<dbReference type="NCBIfam" id="NF009538">
    <property type="entry name" value="PRK12904.1"/>
    <property type="match status" value="1"/>
</dbReference>
<dbReference type="NCBIfam" id="TIGR00963">
    <property type="entry name" value="secA"/>
    <property type="match status" value="1"/>
</dbReference>
<dbReference type="PANTHER" id="PTHR30612:SF0">
    <property type="entry name" value="CHLOROPLAST PROTEIN-TRANSPORTING ATPASE"/>
    <property type="match status" value="1"/>
</dbReference>
<dbReference type="PANTHER" id="PTHR30612">
    <property type="entry name" value="SECA INNER MEMBRANE COMPONENT OF SEC PROTEIN SECRETION SYSTEM"/>
    <property type="match status" value="1"/>
</dbReference>
<dbReference type="Pfam" id="PF21090">
    <property type="entry name" value="P-loop_SecA"/>
    <property type="match status" value="1"/>
</dbReference>
<dbReference type="Pfam" id="PF02810">
    <property type="entry name" value="SEC-C"/>
    <property type="match status" value="1"/>
</dbReference>
<dbReference type="Pfam" id="PF07517">
    <property type="entry name" value="SecA_DEAD"/>
    <property type="match status" value="1"/>
</dbReference>
<dbReference type="Pfam" id="PF01043">
    <property type="entry name" value="SecA_PP_bind"/>
    <property type="match status" value="1"/>
</dbReference>
<dbReference type="Pfam" id="PF07516">
    <property type="entry name" value="SecA_SW"/>
    <property type="match status" value="1"/>
</dbReference>
<dbReference type="PRINTS" id="PR00906">
    <property type="entry name" value="SECA"/>
</dbReference>
<dbReference type="SMART" id="SM00957">
    <property type="entry name" value="SecA_DEAD"/>
    <property type="match status" value="1"/>
</dbReference>
<dbReference type="SMART" id="SM00958">
    <property type="entry name" value="SecA_PP_bind"/>
    <property type="match status" value="1"/>
</dbReference>
<dbReference type="SUPFAM" id="SSF81886">
    <property type="entry name" value="Helical scaffold and wing domains of SecA"/>
    <property type="match status" value="1"/>
</dbReference>
<dbReference type="SUPFAM" id="SSF52540">
    <property type="entry name" value="P-loop containing nucleoside triphosphate hydrolases"/>
    <property type="match status" value="2"/>
</dbReference>
<dbReference type="SUPFAM" id="SSF81767">
    <property type="entry name" value="Pre-protein crosslinking domain of SecA"/>
    <property type="match status" value="1"/>
</dbReference>
<dbReference type="PROSITE" id="PS01312">
    <property type="entry name" value="SECA"/>
    <property type="match status" value="1"/>
</dbReference>
<dbReference type="PROSITE" id="PS51196">
    <property type="entry name" value="SECA_MOTOR_DEAD"/>
    <property type="match status" value="1"/>
</dbReference>
<proteinExistence type="inferred from homology"/>
<comment type="function">
    <text evidence="1">Part of the Sec protein translocase complex. Interacts with the SecYEG preprotein conducting channel. Has a central role in coupling the hydrolysis of ATP to the transfer of proteins into and across the cell membrane, serving both as a receptor for the preprotein-SecB complex and as an ATP-driven molecular motor driving the stepwise translocation of polypeptide chains across the membrane.</text>
</comment>
<comment type="catalytic activity">
    <reaction evidence="1">
        <text>ATP + H2O + cellular proteinSide 1 = ADP + phosphate + cellular proteinSide 2.</text>
        <dbReference type="EC" id="7.4.2.8"/>
    </reaction>
</comment>
<comment type="cofactor">
    <cofactor evidence="1">
        <name>Zn(2+)</name>
        <dbReference type="ChEBI" id="CHEBI:29105"/>
    </cofactor>
    <text evidence="1">May bind 1 zinc ion per subunit.</text>
</comment>
<comment type="subunit">
    <text evidence="1">Monomer and homodimer. Part of the essential Sec protein translocation apparatus which comprises SecA, SecYEG and auxiliary proteins SecDF-YajC and YidC.</text>
</comment>
<comment type="subcellular location">
    <subcellularLocation>
        <location evidence="1">Cell inner membrane</location>
        <topology evidence="1">Peripheral membrane protein</topology>
        <orientation evidence="1">Cytoplasmic side</orientation>
    </subcellularLocation>
    <subcellularLocation>
        <location evidence="1">Cytoplasm</location>
    </subcellularLocation>
    <text evidence="1">Distribution is 50-50.</text>
</comment>
<comment type="similarity">
    <text evidence="1">Belongs to the SecA family.</text>
</comment>
<keyword id="KW-0067">ATP-binding</keyword>
<keyword id="KW-0997">Cell inner membrane</keyword>
<keyword id="KW-1003">Cell membrane</keyword>
<keyword id="KW-0963">Cytoplasm</keyword>
<keyword id="KW-0472">Membrane</keyword>
<keyword id="KW-0479">Metal-binding</keyword>
<keyword id="KW-0547">Nucleotide-binding</keyword>
<keyword id="KW-0653">Protein transport</keyword>
<keyword id="KW-1185">Reference proteome</keyword>
<keyword id="KW-1278">Translocase</keyword>
<keyword id="KW-0811">Translocation</keyword>
<keyword id="KW-0813">Transport</keyword>
<keyword id="KW-0862">Zinc</keyword>